<accession>A0M576</accession>
<sequence length="124" mass="14018">MARIAGVDIPKQKRGVIALTYIFGIGRSRAQEILAQAKVDESKKVSDWDDDEIGKIREAVGQFTIEGELRTEVQISIKRLMDIGCYRGIRHRAGLPLRGQRTKNNSRTRKGRRKTVANKKKATK</sequence>
<evidence type="ECO:0000255" key="1">
    <source>
        <dbReference type="HAMAP-Rule" id="MF_01315"/>
    </source>
</evidence>
<evidence type="ECO:0000256" key="2">
    <source>
        <dbReference type="SAM" id="MobiDB-lite"/>
    </source>
</evidence>
<evidence type="ECO:0000305" key="3"/>
<feature type="chain" id="PRO_0000306612" description="Small ribosomal subunit protein uS13">
    <location>
        <begin position="1"/>
        <end position="124"/>
    </location>
</feature>
<feature type="region of interest" description="Disordered" evidence="2">
    <location>
        <begin position="94"/>
        <end position="124"/>
    </location>
</feature>
<feature type="compositionally biased region" description="Basic residues" evidence="2">
    <location>
        <begin position="100"/>
        <end position="124"/>
    </location>
</feature>
<dbReference type="EMBL" id="CU207366">
    <property type="protein sequence ID" value="CAL67771.1"/>
    <property type="molecule type" value="Genomic_DNA"/>
</dbReference>
<dbReference type="RefSeq" id="WP_011710674.1">
    <property type="nucleotide sequence ID" value="NC_008571.1"/>
</dbReference>
<dbReference type="SMR" id="A0M576"/>
<dbReference type="STRING" id="411154.GFO_2817"/>
<dbReference type="KEGG" id="gfo:GFO_2817"/>
<dbReference type="eggNOG" id="COG0099">
    <property type="taxonomic scope" value="Bacteria"/>
</dbReference>
<dbReference type="HOGENOM" id="CLU_103849_1_2_10"/>
<dbReference type="OrthoDB" id="9803610at2"/>
<dbReference type="Proteomes" id="UP000000755">
    <property type="component" value="Chromosome"/>
</dbReference>
<dbReference type="GO" id="GO:0005829">
    <property type="term" value="C:cytosol"/>
    <property type="evidence" value="ECO:0007669"/>
    <property type="project" value="TreeGrafter"/>
</dbReference>
<dbReference type="GO" id="GO:0015935">
    <property type="term" value="C:small ribosomal subunit"/>
    <property type="evidence" value="ECO:0007669"/>
    <property type="project" value="TreeGrafter"/>
</dbReference>
<dbReference type="GO" id="GO:0019843">
    <property type="term" value="F:rRNA binding"/>
    <property type="evidence" value="ECO:0007669"/>
    <property type="project" value="UniProtKB-UniRule"/>
</dbReference>
<dbReference type="GO" id="GO:0003735">
    <property type="term" value="F:structural constituent of ribosome"/>
    <property type="evidence" value="ECO:0007669"/>
    <property type="project" value="InterPro"/>
</dbReference>
<dbReference type="GO" id="GO:0000049">
    <property type="term" value="F:tRNA binding"/>
    <property type="evidence" value="ECO:0007669"/>
    <property type="project" value="UniProtKB-UniRule"/>
</dbReference>
<dbReference type="GO" id="GO:0006412">
    <property type="term" value="P:translation"/>
    <property type="evidence" value="ECO:0007669"/>
    <property type="project" value="UniProtKB-UniRule"/>
</dbReference>
<dbReference type="FunFam" id="1.10.8.50:FF:000001">
    <property type="entry name" value="30S ribosomal protein S13"/>
    <property type="match status" value="1"/>
</dbReference>
<dbReference type="FunFam" id="4.10.910.10:FF:000001">
    <property type="entry name" value="30S ribosomal protein S13"/>
    <property type="match status" value="1"/>
</dbReference>
<dbReference type="Gene3D" id="1.10.8.50">
    <property type="match status" value="1"/>
</dbReference>
<dbReference type="Gene3D" id="4.10.910.10">
    <property type="entry name" value="30s ribosomal protein s13, domain 2"/>
    <property type="match status" value="1"/>
</dbReference>
<dbReference type="HAMAP" id="MF_01315">
    <property type="entry name" value="Ribosomal_uS13"/>
    <property type="match status" value="1"/>
</dbReference>
<dbReference type="InterPro" id="IPR027437">
    <property type="entry name" value="Rbsml_uS13_C"/>
</dbReference>
<dbReference type="InterPro" id="IPR001892">
    <property type="entry name" value="Ribosomal_uS13"/>
</dbReference>
<dbReference type="InterPro" id="IPR010979">
    <property type="entry name" value="Ribosomal_uS13-like_H2TH"/>
</dbReference>
<dbReference type="InterPro" id="IPR019980">
    <property type="entry name" value="Ribosomal_uS13_bac-type"/>
</dbReference>
<dbReference type="InterPro" id="IPR018269">
    <property type="entry name" value="Ribosomal_uS13_CS"/>
</dbReference>
<dbReference type="NCBIfam" id="TIGR03631">
    <property type="entry name" value="uS13_bact"/>
    <property type="match status" value="1"/>
</dbReference>
<dbReference type="PANTHER" id="PTHR10871">
    <property type="entry name" value="30S RIBOSOMAL PROTEIN S13/40S RIBOSOMAL PROTEIN S18"/>
    <property type="match status" value="1"/>
</dbReference>
<dbReference type="PANTHER" id="PTHR10871:SF1">
    <property type="entry name" value="SMALL RIBOSOMAL SUBUNIT PROTEIN US13M"/>
    <property type="match status" value="1"/>
</dbReference>
<dbReference type="Pfam" id="PF00416">
    <property type="entry name" value="Ribosomal_S13"/>
    <property type="match status" value="1"/>
</dbReference>
<dbReference type="PIRSF" id="PIRSF002134">
    <property type="entry name" value="Ribosomal_S13"/>
    <property type="match status" value="1"/>
</dbReference>
<dbReference type="SUPFAM" id="SSF46946">
    <property type="entry name" value="S13-like H2TH domain"/>
    <property type="match status" value="1"/>
</dbReference>
<dbReference type="PROSITE" id="PS00646">
    <property type="entry name" value="RIBOSOMAL_S13_1"/>
    <property type="match status" value="1"/>
</dbReference>
<dbReference type="PROSITE" id="PS50159">
    <property type="entry name" value="RIBOSOMAL_S13_2"/>
    <property type="match status" value="1"/>
</dbReference>
<proteinExistence type="inferred from homology"/>
<gene>
    <name evidence="1" type="primary">rpsM</name>
    <name type="ordered locus">GFO_2817</name>
</gene>
<name>RS13_CHRFK</name>
<reference key="1">
    <citation type="journal article" date="2006" name="Environ. Microbiol.">
        <title>Whole genome analysis of the marine Bacteroidetes'Gramella forsetii' reveals adaptations to degradation of polymeric organic matter.</title>
        <authorList>
            <person name="Bauer M."/>
            <person name="Kube M."/>
            <person name="Teeling H."/>
            <person name="Richter M."/>
            <person name="Lombardot T."/>
            <person name="Allers E."/>
            <person name="Wuerdemann C.A."/>
            <person name="Quast C."/>
            <person name="Kuhl H."/>
            <person name="Knaust F."/>
            <person name="Woebken D."/>
            <person name="Bischof K."/>
            <person name="Mussmann M."/>
            <person name="Choudhuri J.V."/>
            <person name="Meyer F."/>
            <person name="Reinhardt R."/>
            <person name="Amann R.I."/>
            <person name="Gloeckner F.O."/>
        </authorList>
    </citation>
    <scope>NUCLEOTIDE SEQUENCE [LARGE SCALE GENOMIC DNA]</scope>
    <source>
        <strain>DSM 17595 / CGMCC 1.15422 / KT0803</strain>
    </source>
</reference>
<protein>
    <recommendedName>
        <fullName evidence="1">Small ribosomal subunit protein uS13</fullName>
    </recommendedName>
    <alternativeName>
        <fullName evidence="3">30S ribosomal protein S13</fullName>
    </alternativeName>
</protein>
<keyword id="KW-0687">Ribonucleoprotein</keyword>
<keyword id="KW-0689">Ribosomal protein</keyword>
<keyword id="KW-0694">RNA-binding</keyword>
<keyword id="KW-0699">rRNA-binding</keyword>
<keyword id="KW-0820">tRNA-binding</keyword>
<comment type="function">
    <text evidence="1">Located at the top of the head of the 30S subunit, it contacts several helices of the 16S rRNA. In the 70S ribosome it contacts the 23S rRNA (bridge B1a) and protein L5 of the 50S subunit (bridge B1b), connecting the 2 subunits; these bridges are implicated in subunit movement. Contacts the tRNAs in the A and P-sites.</text>
</comment>
<comment type="subunit">
    <text evidence="1">Part of the 30S ribosomal subunit. Forms a loose heterodimer with protein S19. Forms two bridges to the 50S subunit in the 70S ribosome.</text>
</comment>
<comment type="similarity">
    <text evidence="1">Belongs to the universal ribosomal protein uS13 family.</text>
</comment>
<organism>
    <name type="scientific">Christiangramia forsetii (strain DSM 17595 / CGMCC 1.15422 / KT0803)</name>
    <name type="common">Gramella forsetii</name>
    <dbReference type="NCBI Taxonomy" id="411154"/>
    <lineage>
        <taxon>Bacteria</taxon>
        <taxon>Pseudomonadati</taxon>
        <taxon>Bacteroidota</taxon>
        <taxon>Flavobacteriia</taxon>
        <taxon>Flavobacteriales</taxon>
        <taxon>Flavobacteriaceae</taxon>
        <taxon>Christiangramia</taxon>
    </lineage>
</organism>